<comment type="function">
    <text evidence="1">Can catalyze the hydrolysis of ATP in the presence of single-stranded DNA, the ATP-dependent uptake of single-stranded DNA by duplex DNA, and the ATP-dependent hybridization of homologous single-stranded DNAs. It interacts with LexA causing its activation and leading to its autocatalytic cleavage.</text>
</comment>
<comment type="subcellular location">
    <subcellularLocation>
        <location evidence="1">Cytoplasm</location>
    </subcellularLocation>
</comment>
<comment type="similarity">
    <text evidence="1">Belongs to the RecA family.</text>
</comment>
<name>RECA_BORA1</name>
<dbReference type="EMBL" id="AM167904">
    <property type="protein sequence ID" value="CAJ49919.1"/>
    <property type="molecule type" value="Genomic_DNA"/>
</dbReference>
<dbReference type="RefSeq" id="WP_012417970.1">
    <property type="nucleotide sequence ID" value="NC_010645.1"/>
</dbReference>
<dbReference type="SMR" id="Q2KYE8"/>
<dbReference type="STRING" id="360910.BAV2309"/>
<dbReference type="GeneID" id="92934576"/>
<dbReference type="KEGG" id="bav:BAV2309"/>
<dbReference type="eggNOG" id="COG0468">
    <property type="taxonomic scope" value="Bacteria"/>
</dbReference>
<dbReference type="HOGENOM" id="CLU_040469_3_2_4"/>
<dbReference type="OrthoDB" id="9776733at2"/>
<dbReference type="Proteomes" id="UP000001977">
    <property type="component" value="Chromosome"/>
</dbReference>
<dbReference type="GO" id="GO:0005829">
    <property type="term" value="C:cytosol"/>
    <property type="evidence" value="ECO:0007669"/>
    <property type="project" value="TreeGrafter"/>
</dbReference>
<dbReference type="GO" id="GO:0005524">
    <property type="term" value="F:ATP binding"/>
    <property type="evidence" value="ECO:0007669"/>
    <property type="project" value="UniProtKB-UniRule"/>
</dbReference>
<dbReference type="GO" id="GO:0016887">
    <property type="term" value="F:ATP hydrolysis activity"/>
    <property type="evidence" value="ECO:0007669"/>
    <property type="project" value="InterPro"/>
</dbReference>
<dbReference type="GO" id="GO:0140664">
    <property type="term" value="F:ATP-dependent DNA damage sensor activity"/>
    <property type="evidence" value="ECO:0007669"/>
    <property type="project" value="InterPro"/>
</dbReference>
<dbReference type="GO" id="GO:0003684">
    <property type="term" value="F:damaged DNA binding"/>
    <property type="evidence" value="ECO:0007669"/>
    <property type="project" value="UniProtKB-UniRule"/>
</dbReference>
<dbReference type="GO" id="GO:0003697">
    <property type="term" value="F:single-stranded DNA binding"/>
    <property type="evidence" value="ECO:0007669"/>
    <property type="project" value="UniProtKB-UniRule"/>
</dbReference>
<dbReference type="GO" id="GO:0006310">
    <property type="term" value="P:DNA recombination"/>
    <property type="evidence" value="ECO:0007669"/>
    <property type="project" value="UniProtKB-UniRule"/>
</dbReference>
<dbReference type="GO" id="GO:0006281">
    <property type="term" value="P:DNA repair"/>
    <property type="evidence" value="ECO:0007669"/>
    <property type="project" value="UniProtKB-UniRule"/>
</dbReference>
<dbReference type="GO" id="GO:0009432">
    <property type="term" value="P:SOS response"/>
    <property type="evidence" value="ECO:0007669"/>
    <property type="project" value="UniProtKB-UniRule"/>
</dbReference>
<dbReference type="CDD" id="cd00983">
    <property type="entry name" value="RecA"/>
    <property type="match status" value="1"/>
</dbReference>
<dbReference type="FunFam" id="3.40.50.300:FF:000087">
    <property type="entry name" value="Recombinase RecA"/>
    <property type="match status" value="1"/>
</dbReference>
<dbReference type="Gene3D" id="3.40.50.300">
    <property type="entry name" value="P-loop containing nucleotide triphosphate hydrolases"/>
    <property type="match status" value="1"/>
</dbReference>
<dbReference type="HAMAP" id="MF_00268">
    <property type="entry name" value="RecA"/>
    <property type="match status" value="1"/>
</dbReference>
<dbReference type="InterPro" id="IPR003593">
    <property type="entry name" value="AAA+_ATPase"/>
</dbReference>
<dbReference type="InterPro" id="IPR013765">
    <property type="entry name" value="DNA_recomb/repair_RecA"/>
</dbReference>
<dbReference type="InterPro" id="IPR020584">
    <property type="entry name" value="DNA_recomb/repair_RecA_CS"/>
</dbReference>
<dbReference type="InterPro" id="IPR027417">
    <property type="entry name" value="P-loop_NTPase"/>
</dbReference>
<dbReference type="InterPro" id="IPR049261">
    <property type="entry name" value="RecA-like_C"/>
</dbReference>
<dbReference type="InterPro" id="IPR049428">
    <property type="entry name" value="RecA-like_N"/>
</dbReference>
<dbReference type="InterPro" id="IPR020588">
    <property type="entry name" value="RecA_ATP-bd"/>
</dbReference>
<dbReference type="InterPro" id="IPR023400">
    <property type="entry name" value="RecA_C_sf"/>
</dbReference>
<dbReference type="InterPro" id="IPR020587">
    <property type="entry name" value="RecA_monomer-monomer_interface"/>
</dbReference>
<dbReference type="NCBIfam" id="TIGR02012">
    <property type="entry name" value="tigrfam_recA"/>
    <property type="match status" value="1"/>
</dbReference>
<dbReference type="PANTHER" id="PTHR45900:SF1">
    <property type="entry name" value="MITOCHONDRIAL DNA REPAIR PROTEIN RECA HOMOLOG-RELATED"/>
    <property type="match status" value="1"/>
</dbReference>
<dbReference type="PANTHER" id="PTHR45900">
    <property type="entry name" value="RECA"/>
    <property type="match status" value="1"/>
</dbReference>
<dbReference type="Pfam" id="PF00154">
    <property type="entry name" value="RecA"/>
    <property type="match status" value="1"/>
</dbReference>
<dbReference type="Pfam" id="PF21096">
    <property type="entry name" value="RecA_C"/>
    <property type="match status" value="1"/>
</dbReference>
<dbReference type="PRINTS" id="PR00142">
    <property type="entry name" value="RECA"/>
</dbReference>
<dbReference type="SMART" id="SM00382">
    <property type="entry name" value="AAA"/>
    <property type="match status" value="1"/>
</dbReference>
<dbReference type="SUPFAM" id="SSF52540">
    <property type="entry name" value="P-loop containing nucleoside triphosphate hydrolases"/>
    <property type="match status" value="1"/>
</dbReference>
<dbReference type="SUPFAM" id="SSF54752">
    <property type="entry name" value="RecA protein, C-terminal domain"/>
    <property type="match status" value="1"/>
</dbReference>
<dbReference type="PROSITE" id="PS00321">
    <property type="entry name" value="RECA_1"/>
    <property type="match status" value="1"/>
</dbReference>
<dbReference type="PROSITE" id="PS50162">
    <property type="entry name" value="RECA_2"/>
    <property type="match status" value="1"/>
</dbReference>
<dbReference type="PROSITE" id="PS50163">
    <property type="entry name" value="RECA_3"/>
    <property type="match status" value="1"/>
</dbReference>
<sequence length="353" mass="37879">MDEKTSKAASEKAKALAAALSQIEKQFGKGSIMRYGDNEVEHDIQVVSTGSLGLDIALGVGGLPRGRVVEIYGPESSGKTTLTLQVIAEMQKVGGTCAFVDAEHALDVQYASKLGVNLGDLLISQPDTGEQALEITDALVRSGSVDLIVIDSVAALVPKAEIEGEMGDALPGLQARLMSQALRKLTATIKRTNCMVIFINQIRMKIGVMFGNPETTTGGNALKFYSSVRLDIRRIGSIKKGDEVVGNETRVKVVKNKVAPPFKQAEFDIMYGAGISREGEIIDLGVAANVIEKSGAWYSYSGNRIGQGKDNVREYLKENRAMAIEIENKIRDNQGIVARAAEFAPTAEESAED</sequence>
<accession>Q2KYE8</accession>
<keyword id="KW-0067">ATP-binding</keyword>
<keyword id="KW-0963">Cytoplasm</keyword>
<keyword id="KW-0227">DNA damage</keyword>
<keyword id="KW-0233">DNA recombination</keyword>
<keyword id="KW-0234">DNA repair</keyword>
<keyword id="KW-0238">DNA-binding</keyword>
<keyword id="KW-0547">Nucleotide-binding</keyword>
<keyword id="KW-1185">Reference proteome</keyword>
<keyword id="KW-0742">SOS response</keyword>
<gene>
    <name evidence="1" type="primary">recA</name>
    <name type="ordered locus">BAV2309</name>
</gene>
<proteinExistence type="inferred from homology"/>
<organism>
    <name type="scientific">Bordetella avium (strain 197N)</name>
    <dbReference type="NCBI Taxonomy" id="360910"/>
    <lineage>
        <taxon>Bacteria</taxon>
        <taxon>Pseudomonadati</taxon>
        <taxon>Pseudomonadota</taxon>
        <taxon>Betaproteobacteria</taxon>
        <taxon>Burkholderiales</taxon>
        <taxon>Alcaligenaceae</taxon>
        <taxon>Bordetella</taxon>
    </lineage>
</organism>
<evidence type="ECO:0000255" key="1">
    <source>
        <dbReference type="HAMAP-Rule" id="MF_00268"/>
    </source>
</evidence>
<reference key="1">
    <citation type="journal article" date="2006" name="J. Bacteriol.">
        <title>Comparison of the genome sequence of the poultry pathogen Bordetella avium with those of B. bronchiseptica, B. pertussis, and B. parapertussis reveals extensive diversity in surface structures associated with host interaction.</title>
        <authorList>
            <person name="Sebaihia M."/>
            <person name="Preston A."/>
            <person name="Maskell D.J."/>
            <person name="Kuzmiak H."/>
            <person name="Connell T.D."/>
            <person name="King N.D."/>
            <person name="Orndorff P.E."/>
            <person name="Miyamoto D.M."/>
            <person name="Thomson N.R."/>
            <person name="Harris D."/>
            <person name="Goble A."/>
            <person name="Lord A."/>
            <person name="Murphy L."/>
            <person name="Quail M.A."/>
            <person name="Rutter S."/>
            <person name="Squares R."/>
            <person name="Squares S."/>
            <person name="Woodward J."/>
            <person name="Parkhill J."/>
            <person name="Temple L.M."/>
        </authorList>
    </citation>
    <scope>NUCLEOTIDE SEQUENCE [LARGE SCALE GENOMIC DNA]</scope>
    <source>
        <strain>197N</strain>
    </source>
</reference>
<feature type="chain" id="PRO_1000193291" description="Protein RecA">
    <location>
        <begin position="1"/>
        <end position="353"/>
    </location>
</feature>
<feature type="binding site" evidence="1">
    <location>
        <begin position="73"/>
        <end position="80"/>
    </location>
    <ligand>
        <name>ATP</name>
        <dbReference type="ChEBI" id="CHEBI:30616"/>
    </ligand>
</feature>
<protein>
    <recommendedName>
        <fullName evidence="1">Protein RecA</fullName>
    </recommendedName>
    <alternativeName>
        <fullName evidence="1">Recombinase A</fullName>
    </alternativeName>
</protein>